<sequence>MSSEYRTGREGEFTYRGHTLDELQAMSLEDITALLPARQRRTIERGLTTEQQKLRETVRDADPQKTANDPIRTHLRDMPILPSFVEKTIAVYNGQSFERVRIEPEMIGHYLGEFQLTRTSVEHGQAGIGATRSSKFVPLK</sequence>
<protein>
    <recommendedName>
        <fullName evidence="1">Small ribosomal subunit protein uS19</fullName>
    </recommendedName>
    <alternativeName>
        <fullName evidence="3">30S ribosomal protein S19</fullName>
    </alternativeName>
</protein>
<organism>
    <name type="scientific">Haloquadratum walsbyi (strain DSM 16790 / HBSQ001)</name>
    <dbReference type="NCBI Taxonomy" id="362976"/>
    <lineage>
        <taxon>Archaea</taxon>
        <taxon>Methanobacteriati</taxon>
        <taxon>Methanobacteriota</taxon>
        <taxon>Stenosarchaea group</taxon>
        <taxon>Halobacteria</taxon>
        <taxon>Halobacteriales</taxon>
        <taxon>Haloferacaceae</taxon>
        <taxon>Haloquadratum</taxon>
    </lineage>
</organism>
<gene>
    <name evidence="1" type="primary">rps19</name>
    <name type="ordered locus">HQ_2838A</name>
</gene>
<proteinExistence type="inferred from homology"/>
<dbReference type="EMBL" id="AM180088">
    <property type="protein sequence ID" value="CAJ52945.1"/>
    <property type="molecule type" value="Genomic_DNA"/>
</dbReference>
<dbReference type="RefSeq" id="WP_011572058.1">
    <property type="nucleotide sequence ID" value="NC_008212.1"/>
</dbReference>
<dbReference type="SMR" id="Q18GF3"/>
<dbReference type="STRING" id="362976.HQ_2838A"/>
<dbReference type="GeneID" id="4194654"/>
<dbReference type="KEGG" id="hwa:HQ_2838A"/>
<dbReference type="eggNOG" id="arCOG04099">
    <property type="taxonomic scope" value="Archaea"/>
</dbReference>
<dbReference type="HOGENOM" id="CLU_097347_1_0_2"/>
<dbReference type="Proteomes" id="UP000001975">
    <property type="component" value="Chromosome"/>
</dbReference>
<dbReference type="GO" id="GO:0022627">
    <property type="term" value="C:cytosolic small ribosomal subunit"/>
    <property type="evidence" value="ECO:0007669"/>
    <property type="project" value="TreeGrafter"/>
</dbReference>
<dbReference type="GO" id="GO:0019843">
    <property type="term" value="F:rRNA binding"/>
    <property type="evidence" value="ECO:0007669"/>
    <property type="project" value="UniProtKB-UniRule"/>
</dbReference>
<dbReference type="GO" id="GO:0003735">
    <property type="term" value="F:structural constituent of ribosome"/>
    <property type="evidence" value="ECO:0007669"/>
    <property type="project" value="InterPro"/>
</dbReference>
<dbReference type="GO" id="GO:0000028">
    <property type="term" value="P:ribosomal small subunit assembly"/>
    <property type="evidence" value="ECO:0007669"/>
    <property type="project" value="TreeGrafter"/>
</dbReference>
<dbReference type="GO" id="GO:0006412">
    <property type="term" value="P:translation"/>
    <property type="evidence" value="ECO:0007669"/>
    <property type="project" value="UniProtKB-UniRule"/>
</dbReference>
<dbReference type="FunFam" id="3.30.860.10:FF:000002">
    <property type="entry name" value="40S ribosomal protein S15"/>
    <property type="match status" value="1"/>
</dbReference>
<dbReference type="Gene3D" id="3.30.860.10">
    <property type="entry name" value="30s Ribosomal Protein S19, Chain A"/>
    <property type="match status" value="1"/>
</dbReference>
<dbReference type="HAMAP" id="MF_00531">
    <property type="entry name" value="Ribosomal_uS19"/>
    <property type="match status" value="1"/>
</dbReference>
<dbReference type="InterPro" id="IPR002222">
    <property type="entry name" value="Ribosomal_uS19"/>
</dbReference>
<dbReference type="InterPro" id="IPR020934">
    <property type="entry name" value="Ribosomal_uS19_CS"/>
</dbReference>
<dbReference type="InterPro" id="IPR005713">
    <property type="entry name" value="Ribosomal_uS19_euk/arc"/>
</dbReference>
<dbReference type="InterPro" id="IPR023575">
    <property type="entry name" value="Ribosomal_uS19_SF"/>
</dbReference>
<dbReference type="NCBIfam" id="NF003121">
    <property type="entry name" value="PRK04038.1"/>
    <property type="match status" value="1"/>
</dbReference>
<dbReference type="NCBIfam" id="TIGR01025">
    <property type="entry name" value="uS19_arch"/>
    <property type="match status" value="1"/>
</dbReference>
<dbReference type="PANTHER" id="PTHR11880">
    <property type="entry name" value="RIBOSOMAL PROTEIN S19P FAMILY MEMBER"/>
    <property type="match status" value="1"/>
</dbReference>
<dbReference type="PANTHER" id="PTHR11880:SF2">
    <property type="entry name" value="SMALL RIBOSOMAL SUBUNIT PROTEIN US19"/>
    <property type="match status" value="1"/>
</dbReference>
<dbReference type="Pfam" id="PF00203">
    <property type="entry name" value="Ribosomal_S19"/>
    <property type="match status" value="1"/>
</dbReference>
<dbReference type="PIRSF" id="PIRSF002144">
    <property type="entry name" value="Ribosomal_S19"/>
    <property type="match status" value="1"/>
</dbReference>
<dbReference type="PRINTS" id="PR00975">
    <property type="entry name" value="RIBOSOMALS19"/>
</dbReference>
<dbReference type="SUPFAM" id="SSF54570">
    <property type="entry name" value="Ribosomal protein S19"/>
    <property type="match status" value="1"/>
</dbReference>
<dbReference type="PROSITE" id="PS00323">
    <property type="entry name" value="RIBOSOMAL_S19"/>
    <property type="match status" value="1"/>
</dbReference>
<evidence type="ECO:0000255" key="1">
    <source>
        <dbReference type="HAMAP-Rule" id="MF_00531"/>
    </source>
</evidence>
<evidence type="ECO:0000256" key="2">
    <source>
        <dbReference type="SAM" id="MobiDB-lite"/>
    </source>
</evidence>
<evidence type="ECO:0000305" key="3"/>
<name>RS19_HALWD</name>
<comment type="function">
    <text evidence="1">Protein S19 forms a complex with S13 that binds strongly to the 16S ribosomal RNA.</text>
</comment>
<comment type="similarity">
    <text evidence="1">Belongs to the universal ribosomal protein uS19 family.</text>
</comment>
<reference key="1">
    <citation type="journal article" date="2006" name="BMC Genomics">
        <title>The genome of the square archaeon Haloquadratum walsbyi: life at the limits of water activity.</title>
        <authorList>
            <person name="Bolhuis H."/>
            <person name="Palm P."/>
            <person name="Wende A."/>
            <person name="Falb M."/>
            <person name="Rampp M."/>
            <person name="Rodriguez-Valera F."/>
            <person name="Pfeiffer F."/>
            <person name="Oesterhelt D."/>
        </authorList>
    </citation>
    <scope>NUCLEOTIDE SEQUENCE [LARGE SCALE GENOMIC DNA]</scope>
    <source>
        <strain>DSM 16790 / HBSQ001</strain>
    </source>
</reference>
<feature type="chain" id="PRO_0000265469" description="Small ribosomal subunit protein uS19">
    <location>
        <begin position="1"/>
        <end position="140"/>
    </location>
</feature>
<feature type="region of interest" description="Disordered" evidence="2">
    <location>
        <begin position="43"/>
        <end position="71"/>
    </location>
</feature>
<feature type="compositionally biased region" description="Basic and acidic residues" evidence="2">
    <location>
        <begin position="52"/>
        <end position="63"/>
    </location>
</feature>
<keyword id="KW-1185">Reference proteome</keyword>
<keyword id="KW-0687">Ribonucleoprotein</keyword>
<keyword id="KW-0689">Ribosomal protein</keyword>
<keyword id="KW-0694">RNA-binding</keyword>
<keyword id="KW-0699">rRNA-binding</keyword>
<accession>Q18GF3</accession>